<reference key="1">
    <citation type="journal article" date="2006" name="J. Bacteriol.">
        <title>Comparison of the genome sequence of the poultry pathogen Bordetella avium with those of B. bronchiseptica, B. pertussis, and B. parapertussis reveals extensive diversity in surface structures associated with host interaction.</title>
        <authorList>
            <person name="Sebaihia M."/>
            <person name="Preston A."/>
            <person name="Maskell D.J."/>
            <person name="Kuzmiak H."/>
            <person name="Connell T.D."/>
            <person name="King N.D."/>
            <person name="Orndorff P.E."/>
            <person name="Miyamoto D.M."/>
            <person name="Thomson N.R."/>
            <person name="Harris D."/>
            <person name="Goble A."/>
            <person name="Lord A."/>
            <person name="Murphy L."/>
            <person name="Quail M.A."/>
            <person name="Rutter S."/>
            <person name="Squares R."/>
            <person name="Squares S."/>
            <person name="Woodward J."/>
            <person name="Parkhill J."/>
            <person name="Temple L.M."/>
        </authorList>
    </citation>
    <scope>NUCLEOTIDE SEQUENCE [LARGE SCALE GENOMIC DNA]</scope>
    <source>
        <strain>197N</strain>
    </source>
</reference>
<accession>Q2L048</accession>
<gene>
    <name evidence="1" type="primary">adc</name>
    <name type="ordered locus">BAV0264</name>
</gene>
<proteinExistence type="inferred from homology"/>
<sequence length="246" mass="27282">MNIDTVRANAFAMPLTSPAFPMGPYRFVKREFFVITYRTDPEALRSVVPEPLAVTQPLVHYEFIRMPDSTGFGDYTESGQVIPVEYEGVAGSYTHAMYLNDHPPIAGGRELWGFPKKLALPTLKVHTDTLVGTLDYGPIRVATGTMGYKHEEVDIVEQARHLSAPNFLLKIIPHVDCSPRICELVRYYLEDIRVYGAWSGPAALELAPHALAPVADLPVLEVVGARHFIADLTLGLGEVVYDYLAK</sequence>
<name>ADC_BORA1</name>
<dbReference type="EC" id="4.1.1.4" evidence="1"/>
<dbReference type="EMBL" id="AM167904">
    <property type="protein sequence ID" value="CAJ47869.1"/>
    <property type="molecule type" value="Genomic_DNA"/>
</dbReference>
<dbReference type="RefSeq" id="WP_012415966.1">
    <property type="nucleotide sequence ID" value="NC_010645.1"/>
</dbReference>
<dbReference type="SMR" id="Q2L048"/>
<dbReference type="STRING" id="360910.BAV0264"/>
<dbReference type="GeneID" id="92936487"/>
<dbReference type="KEGG" id="bav:BAV0264"/>
<dbReference type="eggNOG" id="COG4689">
    <property type="taxonomic scope" value="Bacteria"/>
</dbReference>
<dbReference type="HOGENOM" id="CLU_077089_0_0_4"/>
<dbReference type="OrthoDB" id="1633687at2"/>
<dbReference type="Proteomes" id="UP000001977">
    <property type="component" value="Chromosome"/>
</dbReference>
<dbReference type="GO" id="GO:0047602">
    <property type="term" value="F:acetoacetate decarboxylase activity"/>
    <property type="evidence" value="ECO:0007669"/>
    <property type="project" value="UniProtKB-UniRule"/>
</dbReference>
<dbReference type="Gene3D" id="2.40.400.10">
    <property type="entry name" value="Acetoacetate decarboxylase-like"/>
    <property type="match status" value="1"/>
</dbReference>
<dbReference type="HAMAP" id="MF_00597">
    <property type="entry name" value="ADC"/>
    <property type="match status" value="1"/>
</dbReference>
<dbReference type="InterPro" id="IPR010451">
    <property type="entry name" value="Acetoacetate_decarboxylase"/>
</dbReference>
<dbReference type="InterPro" id="IPR023653">
    <property type="entry name" value="Acetoacetate_decarboxylase_bac"/>
</dbReference>
<dbReference type="InterPro" id="IPR023375">
    <property type="entry name" value="ADC_dom_sf"/>
</dbReference>
<dbReference type="NCBIfam" id="NF002614">
    <property type="entry name" value="PRK02265.1"/>
    <property type="match status" value="1"/>
</dbReference>
<dbReference type="Pfam" id="PF06314">
    <property type="entry name" value="ADC"/>
    <property type="match status" value="1"/>
</dbReference>
<dbReference type="SUPFAM" id="SSF160104">
    <property type="entry name" value="Acetoacetate decarboxylase-like"/>
    <property type="match status" value="1"/>
</dbReference>
<feature type="chain" id="PRO_1000025630" description="Acetoacetate decarboxylase">
    <location>
        <begin position="1"/>
        <end position="246"/>
    </location>
</feature>
<feature type="active site" description="Schiff-base intermediate with acetoacetate" evidence="1">
    <location>
        <position position="116"/>
    </location>
</feature>
<organism>
    <name type="scientific">Bordetella avium (strain 197N)</name>
    <dbReference type="NCBI Taxonomy" id="360910"/>
    <lineage>
        <taxon>Bacteria</taxon>
        <taxon>Pseudomonadati</taxon>
        <taxon>Pseudomonadota</taxon>
        <taxon>Betaproteobacteria</taxon>
        <taxon>Burkholderiales</taxon>
        <taxon>Alcaligenaceae</taxon>
        <taxon>Bordetella</taxon>
    </lineage>
</organism>
<comment type="function">
    <text evidence="1">Catalyzes the conversion of acetoacetate to acetone and carbon dioxide.</text>
</comment>
<comment type="catalytic activity">
    <reaction evidence="1">
        <text>acetoacetate + H(+) = acetone + CO2</text>
        <dbReference type="Rhea" id="RHEA:19729"/>
        <dbReference type="ChEBI" id="CHEBI:13705"/>
        <dbReference type="ChEBI" id="CHEBI:15347"/>
        <dbReference type="ChEBI" id="CHEBI:15378"/>
        <dbReference type="ChEBI" id="CHEBI:16526"/>
        <dbReference type="EC" id="4.1.1.4"/>
    </reaction>
</comment>
<comment type="similarity">
    <text evidence="1">Belongs to the ADC family.</text>
</comment>
<protein>
    <recommendedName>
        <fullName evidence="1">Acetoacetate decarboxylase</fullName>
        <shortName evidence="1">AAD</shortName>
        <shortName evidence="1">ADC</shortName>
        <ecNumber evidence="1">4.1.1.4</ecNumber>
    </recommendedName>
</protein>
<keyword id="KW-0210">Decarboxylase</keyword>
<keyword id="KW-0456">Lyase</keyword>
<keyword id="KW-1185">Reference proteome</keyword>
<keyword id="KW-0704">Schiff base</keyword>
<evidence type="ECO:0000255" key="1">
    <source>
        <dbReference type="HAMAP-Rule" id="MF_00597"/>
    </source>
</evidence>